<organism>
    <name type="scientific">Mus musculus</name>
    <name type="common">Mouse</name>
    <dbReference type="NCBI Taxonomy" id="10090"/>
    <lineage>
        <taxon>Eukaryota</taxon>
        <taxon>Metazoa</taxon>
        <taxon>Chordata</taxon>
        <taxon>Craniata</taxon>
        <taxon>Vertebrata</taxon>
        <taxon>Euteleostomi</taxon>
        <taxon>Mammalia</taxon>
        <taxon>Eutheria</taxon>
        <taxon>Euarchontoglires</taxon>
        <taxon>Glires</taxon>
        <taxon>Rodentia</taxon>
        <taxon>Myomorpha</taxon>
        <taxon>Muroidea</taxon>
        <taxon>Muridae</taxon>
        <taxon>Murinae</taxon>
        <taxon>Mus</taxon>
        <taxon>Mus</taxon>
    </lineage>
</organism>
<comment type="function">
    <text evidence="2 12">Receptor for netrin required for axon guidance. Mediates axon repulsion of neuronal growth cones in the developing nervous system upon ligand binding. Axon repulsion in growth cones may be caused by its association with DCC that may trigger signaling for repulsion (By similarity). Functions as a netrin receptor that negatively regulates vascular branching during angiogenesis (PubMed:15510105). Mediates retraction of tip cell filopodia on endothelial growth cones in response to netrin (PubMed:15510105). It also acts as a dependence receptor required for apoptosis induction when not associated with netrin ligand. Mediates apoptosis by activating DAPK1. In the absence of NTN1, activates DAPK1 by reducing its autoinhibitory phosphorylation at Ser-308 thereby increasing its catalytic activity (By similarity).</text>
</comment>
<comment type="subunit">
    <text evidence="1 2 5 13 14 15 16">Interacts with the cytoplasmic part of DCC (By similarity). Interacts with GNAI2 via its cytoplasmic part. Interacts (via death domain) with DAPK1 (via death domain) (By similarity). Interacts (via extracellular domain) with FLRT2 and FLRT3 (via extracellular domain), but has higher affinity for FLRT3 (PubMed:19492039, PubMed:21673655, PubMed:22405201, PubMed:25374360). Identified in a complex with FLRT3 and ADGRL3; does not interact with ADGRL3 by itself (By similarity).</text>
</comment>
<comment type="interaction">
    <interactant intactId="EBI-4396886">
        <id>Q8K1S3</id>
    </interactant>
    <interactant intactId="EBI-4396871">
        <id>Q7TNP2</id>
        <label>Ppp2r1b</label>
    </interactant>
    <organismsDiffer>false</organismsDiffer>
    <experiments>2</experiments>
</comment>
<comment type="interaction">
    <interactant intactId="EBI-11658250">
        <id>Q8K1S3-1</id>
    </interactant>
    <interactant intactId="EBI-1798844">
        <id>O09118</id>
        <label>Ntn1</label>
    </interactant>
    <organismsDiffer>false</organismsDiffer>
    <experiments>4</experiments>
</comment>
<comment type="subcellular location">
    <subcellularLocation>
        <location evidence="13 14 16">Cell membrane</location>
        <topology evidence="2">Single-pass type I membrane protein</topology>
    </subcellularLocation>
    <subcellularLocation>
        <location evidence="2">Membrane raft</location>
    </subcellularLocation>
    <text evidence="2">Associated with lipid rafts.</text>
</comment>
<comment type="alternative products">
    <event type="alternative splicing"/>
    <isoform>
        <id>Q8K1S3-1</id>
        <name>1</name>
        <sequence type="displayed"/>
    </isoform>
    <isoform>
        <id>Q8K1S3-2</id>
        <name>2</name>
        <sequence type="described" ref="VSP_011699"/>
    </isoform>
</comment>
<comment type="tissue specificity">
    <text evidence="10 11 12">Highly expressed in brain. Expressed in lung during late development. Expressed during early blood vessel formation, in the semicircular canal and in a dorsal to ventral gradient in the retina.</text>
</comment>
<comment type="PTM">
    <text evidence="1">Phosphorylated on cytoplasmic tyrosine residues.</text>
</comment>
<comment type="PTM">
    <text evidence="2">Palmitoylation is required for pro-apoptotic activity, but not for location at lipid rafts.</text>
</comment>
<comment type="PTM">
    <text evidence="2">Proteolytically cleaved by caspases during apoptosis. The cleavage does not take place when the receptor is associated with netrin ligand. Its cleavage by caspases is required to induce apoptosis.</text>
</comment>
<comment type="disruption phenotype">
    <text evidence="12">Complete embryonic lethality, due to defects in blood vessel development that lead to heart failure. Mutant embryos display increased branching of the internal carotid artery and of blood vessels in the nervous system, including thinner and more highly branched brain capillaries. Endothelial tip cells present an increased number of filopodia.</text>
</comment>
<comment type="similarity">
    <text evidence="18">Belongs to the unc-5 family.</text>
</comment>
<comment type="sequence caution" evidence="18">
    <conflict type="erroneous initiation">
        <sequence resource="EMBL-CDS" id="AAH48162"/>
    </conflict>
</comment>
<keyword id="KW-0002">3D-structure</keyword>
<keyword id="KW-0025">Alternative splicing</keyword>
<keyword id="KW-0037">Angiogenesis</keyword>
<keyword id="KW-0053">Apoptosis</keyword>
<keyword id="KW-1003">Cell membrane</keyword>
<keyword id="KW-0217">Developmental protein</keyword>
<keyword id="KW-1015">Disulfide bond</keyword>
<keyword id="KW-0325">Glycoprotein</keyword>
<keyword id="KW-0393">Immunoglobulin domain</keyword>
<keyword id="KW-0449">Lipoprotein</keyword>
<keyword id="KW-0472">Membrane</keyword>
<keyword id="KW-0564">Palmitate</keyword>
<keyword id="KW-0597">Phosphoprotein</keyword>
<keyword id="KW-0675">Receptor</keyword>
<keyword id="KW-1185">Reference proteome</keyword>
<keyword id="KW-0677">Repeat</keyword>
<keyword id="KW-0732">Signal</keyword>
<keyword id="KW-0812">Transmembrane</keyword>
<keyword id="KW-1133">Transmembrane helix</keyword>
<sequence length="945" mass="103739">MRARSGVRSALLLALLLCWDPTPSLAGVDSAGQVLPDSYPSAPAEQLPYFLLEPQDAYIVKNKPVELHCRAFPATQIYFKCNGEWVSQNDHVTQESLDEATGLRVREVQIEVSRQQVEELFGLEDYWCQCVAWSSSGTTKSRRAYIRIAYLRKNFDQEPLAKEVPLDHEVLLQCRPPEGVPVAEVEWLKNEDVIDPAQDTNFLLTIDHNLIIRQARLSDTANYTCVAKNIVAKRRSTTATVIVYVNGGWSSWAEWSPCSNRCGRGWQKRTRTCTNPAPLNGGAFCEGQAFQKTACTTVCPVDGAWTEWSKWSACSTECAHWRSRECMAPPPQNGGRDCSGTLLDSKNCTDGLCVLNQRTLNDPKSHPLETSGDVALYAGLVVAVFVVVAVLMAVGVIVYRRNCRDFDTDITDSSAALTGGFHPVNFKTARPNNPQLLHPSAPPDLTASAGIYRGPVYALQDSADKIPMTNSPLLDPLPSLKIKVYNSSTIGSGSGLADGADLLGVLPPGTYPGDFSRDTHFLHLRSASLGSQHLLGLPRDPSSSVSGTFGCLGGRLSLPGTGVSLLVPNGAIPQGKFYDLYLHINKAESTLPLSEGSQTVLSPSVTCGPTGLLLCRPVVLTVPHCAEVIAGDWIFQLKTQAHQGHWEEVVTLDEETLNTPCYCQLEAKSCHILLDQLGTYVFMGESYSRSAVKRLQLAIFAPALCTSLEYSLRVYCLEDTPVALKEVLELERTLGGYLVEEPKPLLFKDSYHNLRLSLHDIPHAHWRSKLLAKYQEIPFYHVWNGSQRALHCTFTLERHSLASTEFTCKVCVRQVEGEGQIFQLHTTLAETPAGSLDALCSAPGNAITTQLGPYAFKIPLSIRQKICSSLDAPNSRGNDWRLLAQKLSMDRYLNYFATKASPTGVILDLWEARQQDDGDLNSLASALEEMGKSEMLVAMATDGDC</sequence>
<proteinExistence type="evidence at protein level"/>
<gene>
    <name type="primary">Unc5b</name>
    <name type="synonym">Unc5h2</name>
</gene>
<accession>Q8K1S3</accession>
<accession>Q3U4F2</accession>
<accession>Q6PFH0</accession>
<accession>Q80Y85</accession>
<accession>Q9D398</accession>
<evidence type="ECO:0000250" key="1"/>
<evidence type="ECO:0000250" key="2">
    <source>
        <dbReference type="UniProtKB" id="O08722"/>
    </source>
</evidence>
<evidence type="ECO:0000250" key="3">
    <source>
        <dbReference type="UniProtKB" id="O08747"/>
    </source>
</evidence>
<evidence type="ECO:0000250" key="4">
    <source>
        <dbReference type="UniProtKB" id="Q6ZN44"/>
    </source>
</evidence>
<evidence type="ECO:0000250" key="5">
    <source>
        <dbReference type="UniProtKB" id="Q8IZJ1"/>
    </source>
</evidence>
<evidence type="ECO:0000255" key="6"/>
<evidence type="ECO:0000255" key="7">
    <source>
        <dbReference type="PROSITE-ProRule" id="PRU00064"/>
    </source>
</evidence>
<evidence type="ECO:0000255" key="8">
    <source>
        <dbReference type="PROSITE-ProRule" id="PRU00210"/>
    </source>
</evidence>
<evidence type="ECO:0000255" key="9">
    <source>
        <dbReference type="PROSITE-ProRule" id="PRU00485"/>
    </source>
</evidence>
<evidence type="ECO:0000269" key="10">
    <source>
    </source>
</evidence>
<evidence type="ECO:0000269" key="11">
    <source>
    </source>
</evidence>
<evidence type="ECO:0000269" key="12">
    <source>
    </source>
</evidence>
<evidence type="ECO:0000269" key="13">
    <source>
    </source>
</evidence>
<evidence type="ECO:0000269" key="14">
    <source>
    </source>
</evidence>
<evidence type="ECO:0000269" key="15">
    <source>
    </source>
</evidence>
<evidence type="ECO:0000269" key="16">
    <source>
    </source>
</evidence>
<evidence type="ECO:0000303" key="17">
    <source>
    </source>
</evidence>
<evidence type="ECO:0000305" key="18"/>
<evidence type="ECO:0007829" key="19">
    <source>
        <dbReference type="PDB" id="1WMG"/>
    </source>
</evidence>
<evidence type="ECO:0007829" key="20">
    <source>
        <dbReference type="PDB" id="6OOL"/>
    </source>
</evidence>
<dbReference type="EMBL" id="AJ487853">
    <property type="protein sequence ID" value="CAD32251.1"/>
    <property type="molecule type" value="mRNA"/>
</dbReference>
<dbReference type="EMBL" id="AK018177">
    <property type="protein sequence ID" value="BAB31108.1"/>
    <property type="molecule type" value="mRNA"/>
</dbReference>
<dbReference type="EMBL" id="AK154271">
    <property type="protein sequence ID" value="BAE32479.1"/>
    <property type="molecule type" value="mRNA"/>
</dbReference>
<dbReference type="EMBL" id="BC048162">
    <property type="protein sequence ID" value="AAH48162.1"/>
    <property type="status" value="ALT_INIT"/>
    <property type="molecule type" value="mRNA"/>
</dbReference>
<dbReference type="EMBL" id="BC057560">
    <property type="protein sequence ID" value="AAH57560.1"/>
    <property type="molecule type" value="mRNA"/>
</dbReference>
<dbReference type="CCDS" id="CCDS23872.1">
    <molecule id="Q8K1S3-1"/>
</dbReference>
<dbReference type="CCDS" id="CCDS88011.1">
    <molecule id="Q8K1S3-2"/>
</dbReference>
<dbReference type="RefSeq" id="NP_001346202.1">
    <molecule id="Q8K1S3-2"/>
    <property type="nucleotide sequence ID" value="NM_001359273.1"/>
</dbReference>
<dbReference type="RefSeq" id="NP_084046.2">
    <molecule id="Q8K1S3-1"/>
    <property type="nucleotide sequence ID" value="NM_029770.3"/>
</dbReference>
<dbReference type="RefSeq" id="XP_006513091.1">
    <property type="nucleotide sequence ID" value="XM_006513028.3"/>
</dbReference>
<dbReference type="PDB" id="1WMG">
    <property type="method" value="X-ray"/>
    <property type="resolution" value="2.10 A"/>
    <property type="chains" value="A/B/C/D/E/F=854-943"/>
</dbReference>
<dbReference type="PDB" id="6OOL">
    <property type="method" value="X-ray"/>
    <property type="resolution" value="2.80 A"/>
    <property type="chains" value="A=25-374"/>
</dbReference>
<dbReference type="PDBsum" id="1WMG"/>
<dbReference type="PDBsum" id="6OOL"/>
<dbReference type="SMR" id="Q8K1S3"/>
<dbReference type="BioGRID" id="223296">
    <property type="interactions" value="9"/>
</dbReference>
<dbReference type="FunCoup" id="Q8K1S3">
    <property type="interactions" value="296"/>
</dbReference>
<dbReference type="IntAct" id="Q8K1S3">
    <property type="interactions" value="3"/>
</dbReference>
<dbReference type="STRING" id="10090.ENSMUSP00000077080"/>
<dbReference type="GlyCosmos" id="Q8K1S3">
    <property type="glycosylation" value="2 sites, No reported glycans"/>
</dbReference>
<dbReference type="GlyGen" id="Q8K1S3">
    <property type="glycosylation" value="5 sites, 2 N-linked glycans (2 sites), 1 O-linked glycan (2 sites)"/>
</dbReference>
<dbReference type="iPTMnet" id="Q8K1S3"/>
<dbReference type="PhosphoSitePlus" id="Q8K1S3"/>
<dbReference type="jPOST" id="Q8K1S3"/>
<dbReference type="PaxDb" id="10090-ENSMUSP00000077080"/>
<dbReference type="ProteomicsDB" id="275382">
    <molecule id="Q8K1S3-1"/>
</dbReference>
<dbReference type="ProteomicsDB" id="275383">
    <molecule id="Q8K1S3-2"/>
</dbReference>
<dbReference type="Pumba" id="Q8K1S3"/>
<dbReference type="ABCD" id="Q8K1S3">
    <property type="antibodies" value="21 sequenced antibodies"/>
</dbReference>
<dbReference type="Antibodypedia" id="2329">
    <property type="antibodies" value="199 antibodies from 32 providers"/>
</dbReference>
<dbReference type="DNASU" id="107449"/>
<dbReference type="Ensembl" id="ENSMUST00000077925.7">
    <molecule id="Q8K1S3-1"/>
    <property type="protein sequence ID" value="ENSMUSP00000077080.6"/>
    <property type="gene ID" value="ENSMUSG00000020099.9"/>
</dbReference>
<dbReference type="Ensembl" id="ENSMUST00000218637.2">
    <molecule id="Q8K1S3-2"/>
    <property type="protein sequence ID" value="ENSMUSP00000151251.2"/>
    <property type="gene ID" value="ENSMUSG00000020099.9"/>
</dbReference>
<dbReference type="GeneID" id="107449"/>
<dbReference type="KEGG" id="mmu:107449"/>
<dbReference type="UCSC" id="uc007ffd.1">
    <molecule id="Q8K1S3-2"/>
    <property type="organism name" value="mouse"/>
</dbReference>
<dbReference type="UCSC" id="uc007ffe.1">
    <molecule id="Q8K1S3-1"/>
    <property type="organism name" value="mouse"/>
</dbReference>
<dbReference type="AGR" id="MGI:894703"/>
<dbReference type="CTD" id="219699"/>
<dbReference type="MGI" id="MGI:894703">
    <property type="gene designation" value="Unc5b"/>
</dbReference>
<dbReference type="VEuPathDB" id="HostDB:ENSMUSG00000020099"/>
<dbReference type="eggNOG" id="KOG1480">
    <property type="taxonomic scope" value="Eukaryota"/>
</dbReference>
<dbReference type="GeneTree" id="ENSGT00950000182815"/>
<dbReference type="HOGENOM" id="CLU_014383_0_0_1"/>
<dbReference type="InParanoid" id="Q8K1S3"/>
<dbReference type="OMA" id="WEAKHQE"/>
<dbReference type="OrthoDB" id="5973910at2759"/>
<dbReference type="PhylomeDB" id="Q8K1S3"/>
<dbReference type="TreeFam" id="TF316767"/>
<dbReference type="BioGRID-ORCS" id="107449">
    <property type="hits" value="0 hits in 81 CRISPR screens"/>
</dbReference>
<dbReference type="ChiTaRS" id="Unc5b">
    <property type="organism name" value="mouse"/>
</dbReference>
<dbReference type="EvolutionaryTrace" id="Q8K1S3"/>
<dbReference type="PRO" id="PR:Q8K1S3"/>
<dbReference type="Proteomes" id="UP000000589">
    <property type="component" value="Chromosome 10"/>
</dbReference>
<dbReference type="RNAct" id="Q8K1S3">
    <property type="molecule type" value="protein"/>
</dbReference>
<dbReference type="Bgee" id="ENSMUSG00000020099">
    <property type="expression patterns" value="Expressed in dorsal horn of spinal cord and 254 other cell types or tissues"/>
</dbReference>
<dbReference type="GO" id="GO:0005829">
    <property type="term" value="C:cytosol"/>
    <property type="evidence" value="ECO:0000304"/>
    <property type="project" value="Reactome"/>
</dbReference>
<dbReference type="GO" id="GO:0045121">
    <property type="term" value="C:membrane raft"/>
    <property type="evidence" value="ECO:0007669"/>
    <property type="project" value="UniProtKB-SubCell"/>
</dbReference>
<dbReference type="GO" id="GO:0005886">
    <property type="term" value="C:plasma membrane"/>
    <property type="evidence" value="ECO:0000304"/>
    <property type="project" value="Reactome"/>
</dbReference>
<dbReference type="GO" id="GO:0005042">
    <property type="term" value="F:netrin receptor activity"/>
    <property type="evidence" value="ECO:0007669"/>
    <property type="project" value="InterPro"/>
</dbReference>
<dbReference type="GO" id="GO:0001525">
    <property type="term" value="P:angiogenesis"/>
    <property type="evidence" value="ECO:0007669"/>
    <property type="project" value="UniProtKB-KW"/>
</dbReference>
<dbReference type="GO" id="GO:0033564">
    <property type="term" value="P:anterior/posterior axon guidance"/>
    <property type="evidence" value="ECO:0000315"/>
    <property type="project" value="MGI"/>
</dbReference>
<dbReference type="GO" id="GO:0006915">
    <property type="term" value="P:apoptotic process"/>
    <property type="evidence" value="ECO:0007669"/>
    <property type="project" value="UniProtKB-KW"/>
</dbReference>
<dbReference type="GO" id="GO:0007411">
    <property type="term" value="P:axon guidance"/>
    <property type="evidence" value="ECO:0000266"/>
    <property type="project" value="MGI"/>
</dbReference>
<dbReference type="GO" id="GO:2001240">
    <property type="term" value="P:negative regulation of extrinsic apoptotic signaling pathway in absence of ligand"/>
    <property type="evidence" value="ECO:0007669"/>
    <property type="project" value="Ensembl"/>
</dbReference>
<dbReference type="GO" id="GO:0043524">
    <property type="term" value="P:negative regulation of neuron apoptotic process"/>
    <property type="evidence" value="ECO:0007669"/>
    <property type="project" value="Ensembl"/>
</dbReference>
<dbReference type="GO" id="GO:0051897">
    <property type="term" value="P:positive regulation of phosphatidylinositol 3-kinase/protein kinase B signal transduction"/>
    <property type="evidence" value="ECO:0007669"/>
    <property type="project" value="Ensembl"/>
</dbReference>
<dbReference type="CDD" id="cd08802">
    <property type="entry name" value="Death_UNC5B"/>
    <property type="match status" value="1"/>
</dbReference>
<dbReference type="FunFam" id="1.10.533.10:FF:000001">
    <property type="entry name" value="Unc-5 netrin receptor B"/>
    <property type="match status" value="1"/>
</dbReference>
<dbReference type="FunFam" id="2.20.100.10:FF:000002">
    <property type="entry name" value="Unc-5 netrin receptor C"/>
    <property type="match status" value="1"/>
</dbReference>
<dbReference type="FunFam" id="2.20.100.10:FF:000008">
    <property type="entry name" value="Unc-5 netrin receptor C"/>
    <property type="match status" value="1"/>
</dbReference>
<dbReference type="FunFam" id="2.60.220.30:FF:000003">
    <property type="entry name" value="Unc-5 netrin receptor C"/>
    <property type="match status" value="1"/>
</dbReference>
<dbReference type="FunFam" id="2.60.40.10:FF:000037">
    <property type="entry name" value="Unc-5 netrin receptor C"/>
    <property type="match status" value="1"/>
</dbReference>
<dbReference type="FunFam" id="2.60.40.10:FF:000039">
    <property type="entry name" value="Unc-5 netrin receptor C"/>
    <property type="match status" value="1"/>
</dbReference>
<dbReference type="Gene3D" id="2.60.220.30">
    <property type="match status" value="1"/>
</dbReference>
<dbReference type="Gene3D" id="1.10.533.10">
    <property type="entry name" value="Death Domain, Fas"/>
    <property type="match status" value="1"/>
</dbReference>
<dbReference type="Gene3D" id="2.60.40.10">
    <property type="entry name" value="Immunoglobulins"/>
    <property type="match status" value="2"/>
</dbReference>
<dbReference type="Gene3D" id="2.20.100.10">
    <property type="entry name" value="Thrombospondin type-1 (TSP1) repeat"/>
    <property type="match status" value="2"/>
</dbReference>
<dbReference type="InterPro" id="IPR011029">
    <property type="entry name" value="DEATH-like_dom_sf"/>
</dbReference>
<dbReference type="InterPro" id="IPR000488">
    <property type="entry name" value="Death_dom"/>
</dbReference>
<dbReference type="InterPro" id="IPR042156">
    <property type="entry name" value="Death_UNC5B"/>
</dbReference>
<dbReference type="InterPro" id="IPR007110">
    <property type="entry name" value="Ig-like_dom"/>
</dbReference>
<dbReference type="InterPro" id="IPR036179">
    <property type="entry name" value="Ig-like_dom_sf"/>
</dbReference>
<dbReference type="InterPro" id="IPR013783">
    <property type="entry name" value="Ig-like_fold"/>
</dbReference>
<dbReference type="InterPro" id="IPR013098">
    <property type="entry name" value="Ig_I-set"/>
</dbReference>
<dbReference type="InterPro" id="IPR003599">
    <property type="entry name" value="Ig_sub"/>
</dbReference>
<dbReference type="InterPro" id="IPR003598">
    <property type="entry name" value="Ig_sub2"/>
</dbReference>
<dbReference type="InterPro" id="IPR000884">
    <property type="entry name" value="TSP1_rpt"/>
</dbReference>
<dbReference type="InterPro" id="IPR036383">
    <property type="entry name" value="TSP1_rpt_sf"/>
</dbReference>
<dbReference type="InterPro" id="IPR037936">
    <property type="entry name" value="UNC5"/>
</dbReference>
<dbReference type="InterPro" id="IPR033772">
    <property type="entry name" value="UPA"/>
</dbReference>
<dbReference type="InterPro" id="IPR000906">
    <property type="entry name" value="ZU5_dom"/>
</dbReference>
<dbReference type="PANTHER" id="PTHR12582">
    <property type="entry name" value="NETRIN RECEPTOR UNC5"/>
    <property type="match status" value="1"/>
</dbReference>
<dbReference type="PANTHER" id="PTHR12582:SF6">
    <property type="entry name" value="NETRIN RECEPTOR UNC5B"/>
    <property type="match status" value="1"/>
</dbReference>
<dbReference type="Pfam" id="PF00531">
    <property type="entry name" value="Death"/>
    <property type="match status" value="1"/>
</dbReference>
<dbReference type="Pfam" id="PF07679">
    <property type="entry name" value="I-set"/>
    <property type="match status" value="1"/>
</dbReference>
<dbReference type="Pfam" id="PF00090">
    <property type="entry name" value="TSP_1"/>
    <property type="match status" value="2"/>
</dbReference>
<dbReference type="Pfam" id="PF17217">
    <property type="entry name" value="UPA"/>
    <property type="match status" value="1"/>
</dbReference>
<dbReference type="Pfam" id="PF00791">
    <property type="entry name" value="ZU5"/>
    <property type="match status" value="1"/>
</dbReference>
<dbReference type="PRINTS" id="PR01705">
    <property type="entry name" value="TSP1REPEAT"/>
</dbReference>
<dbReference type="SMART" id="SM00005">
    <property type="entry name" value="DEATH"/>
    <property type="match status" value="1"/>
</dbReference>
<dbReference type="SMART" id="SM00409">
    <property type="entry name" value="IG"/>
    <property type="match status" value="2"/>
</dbReference>
<dbReference type="SMART" id="SM00408">
    <property type="entry name" value="IGc2"/>
    <property type="match status" value="1"/>
</dbReference>
<dbReference type="SMART" id="SM00209">
    <property type="entry name" value="TSP1"/>
    <property type="match status" value="2"/>
</dbReference>
<dbReference type="SMART" id="SM00218">
    <property type="entry name" value="ZU5"/>
    <property type="match status" value="1"/>
</dbReference>
<dbReference type="SUPFAM" id="SSF47986">
    <property type="entry name" value="DEATH domain"/>
    <property type="match status" value="1"/>
</dbReference>
<dbReference type="SUPFAM" id="SSF48726">
    <property type="entry name" value="Immunoglobulin"/>
    <property type="match status" value="2"/>
</dbReference>
<dbReference type="SUPFAM" id="SSF82895">
    <property type="entry name" value="TSP-1 type 1 repeat"/>
    <property type="match status" value="2"/>
</dbReference>
<dbReference type="PROSITE" id="PS50017">
    <property type="entry name" value="DEATH_DOMAIN"/>
    <property type="match status" value="1"/>
</dbReference>
<dbReference type="PROSITE" id="PS50835">
    <property type="entry name" value="IG_LIKE"/>
    <property type="match status" value="1"/>
</dbReference>
<dbReference type="PROSITE" id="PS50092">
    <property type="entry name" value="TSP1"/>
    <property type="match status" value="2"/>
</dbReference>
<dbReference type="PROSITE" id="PS51145">
    <property type="entry name" value="ZU5"/>
    <property type="match status" value="1"/>
</dbReference>
<protein>
    <recommendedName>
        <fullName>Netrin receptor UNC5B</fullName>
    </recommendedName>
    <alternativeName>
        <fullName>Protein unc-5 homolog 2</fullName>
    </alternativeName>
    <alternativeName>
        <fullName>Protein unc-5 homolog B</fullName>
    </alternativeName>
</protein>
<name>UNC5B_MOUSE</name>
<feature type="signal peptide" evidence="6">
    <location>
        <begin position="1"/>
        <end position="26"/>
    </location>
</feature>
<feature type="chain" id="PRO_0000036072" description="Netrin receptor UNC5B">
    <location>
        <begin position="27"/>
        <end position="945"/>
    </location>
</feature>
<feature type="topological domain" description="Extracellular" evidence="6">
    <location>
        <begin position="27"/>
        <end position="377"/>
    </location>
</feature>
<feature type="transmembrane region" description="Helical" evidence="6">
    <location>
        <begin position="378"/>
        <end position="398"/>
    </location>
</feature>
<feature type="topological domain" description="Cytoplasmic" evidence="6">
    <location>
        <begin position="399"/>
        <end position="945"/>
    </location>
</feature>
<feature type="domain" description="Ig-like">
    <location>
        <begin position="48"/>
        <end position="145"/>
    </location>
</feature>
<feature type="domain" description="Ig-like C2-type">
    <location>
        <begin position="153"/>
        <end position="242"/>
    </location>
</feature>
<feature type="domain" description="TSP type-1 1" evidence="8">
    <location>
        <begin position="246"/>
        <end position="300"/>
    </location>
</feature>
<feature type="domain" description="TSP type-1 2" evidence="8">
    <location>
        <begin position="302"/>
        <end position="354"/>
    </location>
</feature>
<feature type="domain" description="ZU5" evidence="9">
    <location>
        <begin position="543"/>
        <end position="686"/>
    </location>
</feature>
<feature type="domain" description="Death" evidence="7">
    <location>
        <begin position="865"/>
        <end position="943"/>
    </location>
</feature>
<feature type="region of interest" description="UPA domain" evidence="1">
    <location>
        <begin position="689"/>
        <end position="838"/>
    </location>
</feature>
<feature type="region of interest" description="Interaction with DCC" evidence="2">
    <location>
        <begin position="707"/>
        <end position="725"/>
    </location>
</feature>
<feature type="site" description="Cleavage; by caspase-3" evidence="2">
    <location>
        <begin position="412"/>
        <end position="413"/>
    </location>
</feature>
<feature type="modified residue" description="Phosphotyrosine" evidence="3">
    <location>
        <position position="581"/>
    </location>
</feature>
<feature type="lipid moiety-binding region" description="S-palmitoyl cysteine" evidence="2">
    <location>
        <position position="403"/>
    </location>
</feature>
<feature type="glycosylation site" description="N-linked (GlcNAc...) asparagine" evidence="6">
    <location>
        <position position="222"/>
    </location>
</feature>
<feature type="glycosylation site" description="N-linked (GlcNAc...) asparagine" evidence="6">
    <location>
        <position position="347"/>
    </location>
</feature>
<feature type="disulfide bond" evidence="4">
    <location>
        <begin position="69"/>
        <end position="130"/>
    </location>
</feature>
<feature type="disulfide bond" evidence="4">
    <location>
        <begin position="81"/>
        <end position="128"/>
    </location>
</feature>
<feature type="disulfide bond" evidence="4">
    <location>
        <begin position="174"/>
        <end position="225"/>
    </location>
</feature>
<feature type="disulfide bond" evidence="1">
    <location>
        <begin position="258"/>
        <end position="295"/>
    </location>
</feature>
<feature type="disulfide bond" evidence="1">
    <location>
        <begin position="262"/>
        <end position="299"/>
    </location>
</feature>
<feature type="disulfide bond" evidence="1">
    <location>
        <begin position="273"/>
        <end position="285"/>
    </location>
</feature>
<feature type="disulfide bond" evidence="4">
    <location>
        <begin position="314"/>
        <end position="348"/>
    </location>
</feature>
<feature type="disulfide bond" evidence="4">
    <location>
        <begin position="318"/>
        <end position="353"/>
    </location>
</feature>
<feature type="disulfide bond" evidence="4">
    <location>
        <begin position="326"/>
        <end position="338"/>
    </location>
</feature>
<feature type="splice variant" id="VSP_011699" description="In isoform 2." evidence="17">
    <original>NQRTLNDPKSHP</original>
    <variation>T</variation>
    <location>
        <begin position="356"/>
        <end position="367"/>
    </location>
</feature>
<feature type="sequence conflict" description="In Ref. 2; BAB31108." evidence="18" ref="2">
    <original>T</original>
    <variation>A</variation>
    <location>
        <position position="238"/>
    </location>
</feature>
<feature type="sequence conflict" description="In Ref. 2; BAB31108." evidence="18" ref="2">
    <original>V</original>
    <variation>E</variation>
    <location>
        <position position="394"/>
    </location>
</feature>
<feature type="sequence conflict" description="In Ref. 2; BAB31108." evidence="18" ref="2">
    <original>T</original>
    <variation>S</variation>
    <location>
        <position position="679"/>
    </location>
</feature>
<feature type="sequence conflict" description="In Ref. 2; BAB31108." evidence="18" ref="2">
    <original>N</original>
    <variation>D</variation>
    <location>
        <position position="874"/>
    </location>
</feature>
<feature type="strand" evidence="20">
    <location>
        <begin position="49"/>
        <end position="52"/>
    </location>
</feature>
<feature type="strand" evidence="20">
    <location>
        <begin position="57"/>
        <end position="60"/>
    </location>
</feature>
<feature type="strand" evidence="20">
    <location>
        <begin position="65"/>
        <end position="73"/>
    </location>
</feature>
<feature type="strand" evidence="20">
    <location>
        <begin position="75"/>
        <end position="81"/>
    </location>
</feature>
<feature type="strand" evidence="20">
    <location>
        <begin position="84"/>
        <end position="86"/>
    </location>
</feature>
<feature type="strand" evidence="20">
    <location>
        <begin position="106"/>
        <end position="112"/>
    </location>
</feature>
<feature type="helix" evidence="20">
    <location>
        <begin position="114"/>
        <end position="119"/>
    </location>
</feature>
<feature type="strand" evidence="20">
    <location>
        <begin position="121"/>
        <end position="124"/>
    </location>
</feature>
<feature type="strand" evidence="20">
    <location>
        <begin position="126"/>
        <end position="133"/>
    </location>
</feature>
<feature type="strand" evidence="20">
    <location>
        <begin position="138"/>
        <end position="140"/>
    </location>
</feature>
<feature type="strand" evidence="20">
    <location>
        <begin position="144"/>
        <end position="151"/>
    </location>
</feature>
<feature type="strand" evidence="20">
    <location>
        <begin position="162"/>
        <end position="165"/>
    </location>
</feature>
<feature type="strand" evidence="20">
    <location>
        <begin position="170"/>
        <end position="172"/>
    </location>
</feature>
<feature type="strand" evidence="20">
    <location>
        <begin position="179"/>
        <end position="181"/>
    </location>
</feature>
<feature type="strand" evidence="20">
    <location>
        <begin position="184"/>
        <end position="189"/>
    </location>
</feature>
<feature type="turn" evidence="20">
    <location>
        <begin position="196"/>
        <end position="198"/>
    </location>
</feature>
<feature type="strand" evidence="20">
    <location>
        <begin position="202"/>
        <end position="204"/>
    </location>
</feature>
<feature type="strand" evidence="20">
    <location>
        <begin position="210"/>
        <end position="214"/>
    </location>
</feature>
<feature type="strand" evidence="20">
    <location>
        <begin position="221"/>
        <end position="228"/>
    </location>
</feature>
<feature type="strand" evidence="20">
    <location>
        <begin position="233"/>
        <end position="235"/>
    </location>
</feature>
<feature type="strand" evidence="20">
    <location>
        <begin position="239"/>
        <end position="245"/>
    </location>
</feature>
<feature type="strand" evidence="20">
    <location>
        <begin position="259"/>
        <end position="270"/>
    </location>
</feature>
<feature type="strand" evidence="20">
    <location>
        <begin position="289"/>
        <end position="297"/>
    </location>
</feature>
<feature type="helix" evidence="19">
    <location>
        <begin position="860"/>
        <end position="871"/>
    </location>
</feature>
<feature type="helix" evidence="19">
    <location>
        <begin position="873"/>
        <end position="875"/>
    </location>
</feature>
<feature type="helix" evidence="19">
    <location>
        <begin position="880"/>
        <end position="886"/>
    </location>
</feature>
<feature type="helix" evidence="19">
    <location>
        <begin position="890"/>
        <end position="892"/>
    </location>
</feature>
<feature type="helix" evidence="19">
    <location>
        <begin position="893"/>
        <end position="897"/>
    </location>
</feature>
<feature type="helix" evidence="19">
    <location>
        <begin position="902"/>
        <end position="913"/>
    </location>
</feature>
<feature type="turn" evidence="19">
    <location>
        <begin position="917"/>
        <end position="919"/>
    </location>
</feature>
<feature type="helix" evidence="19">
    <location>
        <begin position="920"/>
        <end position="929"/>
    </location>
</feature>
<feature type="helix" evidence="19">
    <location>
        <begin position="933"/>
        <end position="941"/>
    </location>
</feature>
<reference key="1">
    <citation type="journal article" date="2002" name="Mech. Dev.">
        <title>Cloning of three mouse Unc5 genes and their expression patterns at mid-gestation.</title>
        <authorList>
            <person name="Engelkamp D."/>
        </authorList>
    </citation>
    <scope>NUCLEOTIDE SEQUENCE [MRNA] (ISOFORM 1)</scope>
    <scope>TISSUE SPECIFICITY</scope>
</reference>
<reference key="2">
    <citation type="journal article" date="2005" name="Science">
        <title>The transcriptional landscape of the mammalian genome.</title>
        <authorList>
            <person name="Carninci P."/>
            <person name="Kasukawa T."/>
            <person name="Katayama S."/>
            <person name="Gough J."/>
            <person name="Frith M.C."/>
            <person name="Maeda N."/>
            <person name="Oyama R."/>
            <person name="Ravasi T."/>
            <person name="Lenhard B."/>
            <person name="Wells C."/>
            <person name="Kodzius R."/>
            <person name="Shimokawa K."/>
            <person name="Bajic V.B."/>
            <person name="Brenner S.E."/>
            <person name="Batalov S."/>
            <person name="Forrest A.R."/>
            <person name="Zavolan M."/>
            <person name="Davis M.J."/>
            <person name="Wilming L.G."/>
            <person name="Aidinis V."/>
            <person name="Allen J.E."/>
            <person name="Ambesi-Impiombato A."/>
            <person name="Apweiler R."/>
            <person name="Aturaliya R.N."/>
            <person name="Bailey T.L."/>
            <person name="Bansal M."/>
            <person name="Baxter L."/>
            <person name="Beisel K.W."/>
            <person name="Bersano T."/>
            <person name="Bono H."/>
            <person name="Chalk A.M."/>
            <person name="Chiu K.P."/>
            <person name="Choudhary V."/>
            <person name="Christoffels A."/>
            <person name="Clutterbuck D.R."/>
            <person name="Crowe M.L."/>
            <person name="Dalla E."/>
            <person name="Dalrymple B.P."/>
            <person name="de Bono B."/>
            <person name="Della Gatta G."/>
            <person name="di Bernardo D."/>
            <person name="Down T."/>
            <person name="Engstrom P."/>
            <person name="Fagiolini M."/>
            <person name="Faulkner G."/>
            <person name="Fletcher C.F."/>
            <person name="Fukushima T."/>
            <person name="Furuno M."/>
            <person name="Futaki S."/>
            <person name="Gariboldi M."/>
            <person name="Georgii-Hemming P."/>
            <person name="Gingeras T.R."/>
            <person name="Gojobori T."/>
            <person name="Green R.E."/>
            <person name="Gustincich S."/>
            <person name="Harbers M."/>
            <person name="Hayashi Y."/>
            <person name="Hensch T.K."/>
            <person name="Hirokawa N."/>
            <person name="Hill D."/>
            <person name="Huminiecki L."/>
            <person name="Iacono M."/>
            <person name="Ikeo K."/>
            <person name="Iwama A."/>
            <person name="Ishikawa T."/>
            <person name="Jakt M."/>
            <person name="Kanapin A."/>
            <person name="Katoh M."/>
            <person name="Kawasawa Y."/>
            <person name="Kelso J."/>
            <person name="Kitamura H."/>
            <person name="Kitano H."/>
            <person name="Kollias G."/>
            <person name="Krishnan S.P."/>
            <person name="Kruger A."/>
            <person name="Kummerfeld S.K."/>
            <person name="Kurochkin I.V."/>
            <person name="Lareau L.F."/>
            <person name="Lazarevic D."/>
            <person name="Lipovich L."/>
            <person name="Liu J."/>
            <person name="Liuni S."/>
            <person name="McWilliam S."/>
            <person name="Madan Babu M."/>
            <person name="Madera M."/>
            <person name="Marchionni L."/>
            <person name="Matsuda H."/>
            <person name="Matsuzawa S."/>
            <person name="Miki H."/>
            <person name="Mignone F."/>
            <person name="Miyake S."/>
            <person name="Morris K."/>
            <person name="Mottagui-Tabar S."/>
            <person name="Mulder N."/>
            <person name="Nakano N."/>
            <person name="Nakauchi H."/>
            <person name="Ng P."/>
            <person name="Nilsson R."/>
            <person name="Nishiguchi S."/>
            <person name="Nishikawa S."/>
            <person name="Nori F."/>
            <person name="Ohara O."/>
            <person name="Okazaki Y."/>
            <person name="Orlando V."/>
            <person name="Pang K.C."/>
            <person name="Pavan W.J."/>
            <person name="Pavesi G."/>
            <person name="Pesole G."/>
            <person name="Petrovsky N."/>
            <person name="Piazza S."/>
            <person name="Reed J."/>
            <person name="Reid J.F."/>
            <person name="Ring B.Z."/>
            <person name="Ringwald M."/>
            <person name="Rost B."/>
            <person name="Ruan Y."/>
            <person name="Salzberg S.L."/>
            <person name="Sandelin A."/>
            <person name="Schneider C."/>
            <person name="Schoenbach C."/>
            <person name="Sekiguchi K."/>
            <person name="Semple C.A."/>
            <person name="Seno S."/>
            <person name="Sessa L."/>
            <person name="Sheng Y."/>
            <person name="Shibata Y."/>
            <person name="Shimada H."/>
            <person name="Shimada K."/>
            <person name="Silva D."/>
            <person name="Sinclair B."/>
            <person name="Sperling S."/>
            <person name="Stupka E."/>
            <person name="Sugiura K."/>
            <person name="Sultana R."/>
            <person name="Takenaka Y."/>
            <person name="Taki K."/>
            <person name="Tammoja K."/>
            <person name="Tan S.L."/>
            <person name="Tang S."/>
            <person name="Taylor M.S."/>
            <person name="Tegner J."/>
            <person name="Teichmann S.A."/>
            <person name="Ueda H.R."/>
            <person name="van Nimwegen E."/>
            <person name="Verardo R."/>
            <person name="Wei C.L."/>
            <person name="Yagi K."/>
            <person name="Yamanishi H."/>
            <person name="Zabarovsky E."/>
            <person name="Zhu S."/>
            <person name="Zimmer A."/>
            <person name="Hide W."/>
            <person name="Bult C."/>
            <person name="Grimmond S.M."/>
            <person name="Teasdale R.D."/>
            <person name="Liu E.T."/>
            <person name="Brusic V."/>
            <person name="Quackenbush J."/>
            <person name="Wahlestedt C."/>
            <person name="Mattick J.S."/>
            <person name="Hume D.A."/>
            <person name="Kai C."/>
            <person name="Sasaki D."/>
            <person name="Tomaru Y."/>
            <person name="Fukuda S."/>
            <person name="Kanamori-Katayama M."/>
            <person name="Suzuki M."/>
            <person name="Aoki J."/>
            <person name="Arakawa T."/>
            <person name="Iida J."/>
            <person name="Imamura K."/>
            <person name="Itoh M."/>
            <person name="Kato T."/>
            <person name="Kawaji H."/>
            <person name="Kawagashira N."/>
            <person name="Kawashima T."/>
            <person name="Kojima M."/>
            <person name="Kondo S."/>
            <person name="Konno H."/>
            <person name="Nakano K."/>
            <person name="Ninomiya N."/>
            <person name="Nishio T."/>
            <person name="Okada M."/>
            <person name="Plessy C."/>
            <person name="Shibata K."/>
            <person name="Shiraki T."/>
            <person name="Suzuki S."/>
            <person name="Tagami M."/>
            <person name="Waki K."/>
            <person name="Watahiki A."/>
            <person name="Okamura-Oho Y."/>
            <person name="Suzuki H."/>
            <person name="Kawai J."/>
            <person name="Hayashizaki Y."/>
        </authorList>
    </citation>
    <scope>NUCLEOTIDE SEQUENCE [LARGE SCALE MRNA] (ISOFORM 1)</scope>
    <source>
        <strain>C57BL/6J</strain>
        <strain>NOD</strain>
        <tissue>Medulla oblongata</tissue>
    </source>
</reference>
<reference key="3">
    <citation type="journal article" date="2004" name="Genome Res.">
        <title>The status, quality, and expansion of the NIH full-length cDNA project: the Mammalian Gene Collection (MGC).</title>
        <authorList>
            <consortium name="The MGC Project Team"/>
        </authorList>
    </citation>
    <scope>NUCLEOTIDE SEQUENCE [LARGE SCALE MRNA] (ISOFORM 2)</scope>
    <source>
        <strain>C57BL/6J</strain>
        <tissue>Brain</tissue>
    </source>
</reference>
<reference key="4">
    <citation type="journal article" date="2003" name="Gene Expr. Patterns">
        <title>Expression of Netrin-1 and its two receptors DCC and UNC5H2 in the developing mouse lung.</title>
        <authorList>
            <person name="Dalvin S."/>
            <person name="Anselmo M.A."/>
            <person name="Prodhan P."/>
            <person name="Komatsuzaki K."/>
            <person name="Schnitzer J.J."/>
            <person name="Kinane T.B."/>
        </authorList>
    </citation>
    <scope>TISSUE SPECIFICITY</scope>
</reference>
<reference key="5">
    <citation type="journal article" date="2004" name="Nature">
        <title>The netrin receptor UNC5B mediates guidance events controlling morphogenesis of the vascular system.</title>
        <authorList>
            <person name="Lu X."/>
            <person name="Le Noble F."/>
            <person name="Yuan L."/>
            <person name="Jiang Q."/>
            <person name="De Lafarge B."/>
            <person name="Sugiyama D."/>
            <person name="Breant C."/>
            <person name="Claes F."/>
            <person name="De Smet F."/>
            <person name="Thomas J.L."/>
            <person name="Autiero M."/>
            <person name="Carmeliet P."/>
            <person name="Tessier-Lavigne M."/>
            <person name="Eichmann A."/>
        </authorList>
    </citation>
    <scope>FUNCTION</scope>
    <scope>DISRUPTION PHENOTYPE</scope>
    <scope>TISSUE SPECIFICITY</scope>
</reference>
<reference key="6">
    <citation type="journal article" date="2009" name="PLoS ONE">
        <title>Unc5B interacts with FLRT3 and Rnd1 to modulate cell adhesion in Xenopus embryos.</title>
        <authorList>
            <person name="Karaulanov E."/>
            <person name="Boettcher R.T."/>
            <person name="Stannek P."/>
            <person name="Wu W."/>
            <person name="Rau M."/>
            <person name="Ogata S."/>
            <person name="Cho K.W.Y."/>
            <person name="Niehrs C."/>
        </authorList>
    </citation>
    <scope>INTERACTION WITH FLRT3</scope>
    <scope>SUBCELLULAR LOCATION</scope>
</reference>
<reference key="7">
    <citation type="journal article" date="2010" name="Cell">
        <title>A tissue-specific atlas of mouse protein phosphorylation and expression.</title>
        <authorList>
            <person name="Huttlin E.L."/>
            <person name="Jedrychowski M.P."/>
            <person name="Elias J.E."/>
            <person name="Goswami T."/>
            <person name="Rad R."/>
            <person name="Beausoleil S.A."/>
            <person name="Villen J."/>
            <person name="Haas W."/>
            <person name="Sowa M.E."/>
            <person name="Gygi S.P."/>
        </authorList>
    </citation>
    <scope>IDENTIFICATION BY MASS SPECTROMETRY [LARGE SCALE ANALYSIS]</scope>
    <source>
        <tissue>Kidney</tissue>
    </source>
</reference>
<reference key="8">
    <citation type="journal article" date="2011" name="EMBO J.">
        <title>FLRT2 and FLRT3 act as repulsive guidance cues for Unc5-positive neurons.</title>
        <authorList>
            <person name="Yamagishi S."/>
            <person name="Hampel F."/>
            <person name="Hata K."/>
            <person name="Del Toro D."/>
            <person name="Schwark M."/>
            <person name="Kvachnina E."/>
            <person name="Bastmeyer M."/>
            <person name="Yamashita T."/>
            <person name="Tarabykin V."/>
            <person name="Klein R."/>
            <person name="Egea J."/>
        </authorList>
    </citation>
    <scope>INTERACTION WITH FLRT2 AND FLRT3</scope>
    <scope>SUBCELLULAR LOCATION</scope>
</reference>
<reference key="9">
    <citation type="journal article" date="2012" name="Neuron">
        <title>FLRT proteins are endogenous latrophilin ligands and regulate excitatory synapse development.</title>
        <authorList>
            <person name="O'Sullivan M.L."/>
            <person name="de Wit J."/>
            <person name="Savas J.N."/>
            <person name="Comoletti D."/>
            <person name="Otto-Hitt S."/>
            <person name="Yates J.R. III"/>
            <person name="Ghosh A."/>
        </authorList>
    </citation>
    <scope>INTERACTION WITH FLRT3</scope>
</reference>
<reference key="10">
    <citation type="journal article" date="2014" name="Neuron">
        <title>FLRT structure: balancing repulsion and cell adhesion in cortical and vascular development.</title>
        <authorList>
            <person name="Seiradake E."/>
            <person name="del Toro D."/>
            <person name="Nagel D."/>
            <person name="Cop F."/>
            <person name="Haertl R."/>
            <person name="Ruff T."/>
            <person name="Seyit-Bremer G."/>
            <person name="Harlos K."/>
            <person name="Border E.C."/>
            <person name="Acker-Palmer A."/>
            <person name="Jones E.Y."/>
            <person name="Klein R."/>
        </authorList>
    </citation>
    <scope>INTERACTION WITH FLRT2 AND FLRT3</scope>
    <scope>SUBCELLULAR LOCATION</scope>
</reference>
<reference key="11">
    <citation type="journal article" date="2006" name="Acta Crystallogr. D">
        <title>Structure of the UNC5H2 death domain.</title>
        <authorList>
            <person name="Handa N."/>
            <person name="Kukimoto-Niino M."/>
            <person name="Akasaka R."/>
            <person name="Murayama K."/>
            <person name="Terada T."/>
            <person name="Inoue M."/>
            <person name="Yabuki T."/>
            <person name="Aoki M."/>
            <person name="Seki E."/>
            <person name="Matsuda T."/>
            <person name="Nunokawa E."/>
            <person name="Tanaka A."/>
            <person name="Hayashizaki Y."/>
            <person name="Kigawa T."/>
            <person name="Shirouzu M."/>
            <person name="Yokoyama S."/>
        </authorList>
    </citation>
    <scope>X-RAY CRYSTALLOGRAPHY (2.1 ANGSTROMS) OF 854-943</scope>
</reference>